<comment type="function">
    <text evidence="1">Catalyzes the oxidation of 5,10-methylenetetrahydrofolate to 5,10-methenyltetrahydrofolate and then the hydrolysis of 5,10-methenyltetrahydrofolate to 10-formyltetrahydrofolate.</text>
</comment>
<comment type="catalytic activity">
    <reaction evidence="1">
        <text>(6R)-5,10-methylene-5,6,7,8-tetrahydrofolate + NADP(+) = (6R)-5,10-methenyltetrahydrofolate + NADPH</text>
        <dbReference type="Rhea" id="RHEA:22812"/>
        <dbReference type="ChEBI" id="CHEBI:15636"/>
        <dbReference type="ChEBI" id="CHEBI:57455"/>
        <dbReference type="ChEBI" id="CHEBI:57783"/>
        <dbReference type="ChEBI" id="CHEBI:58349"/>
        <dbReference type="EC" id="1.5.1.5"/>
    </reaction>
</comment>
<comment type="catalytic activity">
    <reaction evidence="1">
        <text>(6R)-5,10-methenyltetrahydrofolate + H2O = (6R)-10-formyltetrahydrofolate + H(+)</text>
        <dbReference type="Rhea" id="RHEA:23700"/>
        <dbReference type="ChEBI" id="CHEBI:15377"/>
        <dbReference type="ChEBI" id="CHEBI:15378"/>
        <dbReference type="ChEBI" id="CHEBI:57455"/>
        <dbReference type="ChEBI" id="CHEBI:195366"/>
        <dbReference type="EC" id="3.5.4.9"/>
    </reaction>
</comment>
<comment type="pathway">
    <text evidence="1">One-carbon metabolism; tetrahydrofolate interconversion.</text>
</comment>
<comment type="subunit">
    <text evidence="1">Homodimer.</text>
</comment>
<comment type="similarity">
    <text evidence="1">Belongs to the tetrahydrofolate dehydrogenase/cyclohydrolase family.</text>
</comment>
<reference key="1">
    <citation type="journal article" date="2003" name="Proc. Natl. Acad. Sci. U.S.A.">
        <title>The complete genome sequence of the carcinogenic bacterium Helicobacter hepaticus.</title>
        <authorList>
            <person name="Suerbaum S."/>
            <person name="Josenhans C."/>
            <person name="Sterzenbach T."/>
            <person name="Drescher B."/>
            <person name="Brandt P."/>
            <person name="Bell M."/>
            <person name="Droege M."/>
            <person name="Fartmann B."/>
            <person name="Fischer H.-P."/>
            <person name="Ge Z."/>
            <person name="Hoerster A."/>
            <person name="Holland R."/>
            <person name="Klein K."/>
            <person name="Koenig J."/>
            <person name="Macko L."/>
            <person name="Mendz G.L."/>
            <person name="Nyakatura G."/>
            <person name="Schauer D.B."/>
            <person name="Shen Z."/>
            <person name="Weber J."/>
            <person name="Frosch M."/>
            <person name="Fox J.G."/>
        </authorList>
    </citation>
    <scope>NUCLEOTIDE SEQUENCE [LARGE SCALE GENOMIC DNA]</scope>
    <source>
        <strain>ATCC 51449 / 3B1</strain>
    </source>
</reference>
<dbReference type="EC" id="1.5.1.5" evidence="1"/>
<dbReference type="EC" id="3.5.4.9" evidence="1"/>
<dbReference type="EMBL" id="AE017125">
    <property type="protein sequence ID" value="AAP77963.1"/>
    <property type="molecule type" value="Genomic_DNA"/>
</dbReference>
<dbReference type="RefSeq" id="WP_011116206.1">
    <property type="nucleotide sequence ID" value="NC_004917.1"/>
</dbReference>
<dbReference type="SMR" id="Q7VGF6"/>
<dbReference type="STRING" id="235279.HH_1366"/>
<dbReference type="KEGG" id="hhe:HH_1366"/>
<dbReference type="eggNOG" id="COG0190">
    <property type="taxonomic scope" value="Bacteria"/>
</dbReference>
<dbReference type="HOGENOM" id="CLU_034045_2_1_7"/>
<dbReference type="OrthoDB" id="9803580at2"/>
<dbReference type="UniPathway" id="UPA00193"/>
<dbReference type="Proteomes" id="UP000002495">
    <property type="component" value="Chromosome"/>
</dbReference>
<dbReference type="GO" id="GO:0005829">
    <property type="term" value="C:cytosol"/>
    <property type="evidence" value="ECO:0007669"/>
    <property type="project" value="TreeGrafter"/>
</dbReference>
<dbReference type="GO" id="GO:0004477">
    <property type="term" value="F:methenyltetrahydrofolate cyclohydrolase activity"/>
    <property type="evidence" value="ECO:0007669"/>
    <property type="project" value="UniProtKB-UniRule"/>
</dbReference>
<dbReference type="GO" id="GO:0004488">
    <property type="term" value="F:methylenetetrahydrofolate dehydrogenase (NADP+) activity"/>
    <property type="evidence" value="ECO:0007669"/>
    <property type="project" value="UniProtKB-UniRule"/>
</dbReference>
<dbReference type="GO" id="GO:0000105">
    <property type="term" value="P:L-histidine biosynthetic process"/>
    <property type="evidence" value="ECO:0007669"/>
    <property type="project" value="UniProtKB-KW"/>
</dbReference>
<dbReference type="GO" id="GO:0009086">
    <property type="term" value="P:methionine biosynthetic process"/>
    <property type="evidence" value="ECO:0007669"/>
    <property type="project" value="UniProtKB-KW"/>
</dbReference>
<dbReference type="GO" id="GO:0006164">
    <property type="term" value="P:purine nucleotide biosynthetic process"/>
    <property type="evidence" value="ECO:0007669"/>
    <property type="project" value="UniProtKB-KW"/>
</dbReference>
<dbReference type="GO" id="GO:0035999">
    <property type="term" value="P:tetrahydrofolate interconversion"/>
    <property type="evidence" value="ECO:0007669"/>
    <property type="project" value="UniProtKB-UniRule"/>
</dbReference>
<dbReference type="CDD" id="cd01080">
    <property type="entry name" value="NAD_bind_m-THF_DH_Cyclohyd"/>
    <property type="match status" value="1"/>
</dbReference>
<dbReference type="FunFam" id="3.40.50.10860:FF:000001">
    <property type="entry name" value="Bifunctional protein FolD"/>
    <property type="match status" value="1"/>
</dbReference>
<dbReference type="FunFam" id="3.40.50.720:FF:000094">
    <property type="entry name" value="Bifunctional protein FolD"/>
    <property type="match status" value="1"/>
</dbReference>
<dbReference type="Gene3D" id="3.40.50.10860">
    <property type="entry name" value="Leucine Dehydrogenase, chain A, domain 1"/>
    <property type="match status" value="1"/>
</dbReference>
<dbReference type="Gene3D" id="3.40.50.720">
    <property type="entry name" value="NAD(P)-binding Rossmann-like Domain"/>
    <property type="match status" value="1"/>
</dbReference>
<dbReference type="HAMAP" id="MF_01576">
    <property type="entry name" value="THF_DHG_CYH"/>
    <property type="match status" value="1"/>
</dbReference>
<dbReference type="InterPro" id="IPR046346">
    <property type="entry name" value="Aminoacid_DH-like_N_sf"/>
</dbReference>
<dbReference type="InterPro" id="IPR036291">
    <property type="entry name" value="NAD(P)-bd_dom_sf"/>
</dbReference>
<dbReference type="InterPro" id="IPR000672">
    <property type="entry name" value="THF_DH/CycHdrlase"/>
</dbReference>
<dbReference type="InterPro" id="IPR020630">
    <property type="entry name" value="THF_DH/CycHdrlase_cat_dom"/>
</dbReference>
<dbReference type="InterPro" id="IPR020867">
    <property type="entry name" value="THF_DH/CycHdrlase_CS"/>
</dbReference>
<dbReference type="InterPro" id="IPR020631">
    <property type="entry name" value="THF_DH/CycHdrlase_NAD-bd_dom"/>
</dbReference>
<dbReference type="NCBIfam" id="NF008058">
    <property type="entry name" value="PRK10792.1"/>
    <property type="match status" value="1"/>
</dbReference>
<dbReference type="NCBIfam" id="NF010787">
    <property type="entry name" value="PRK14191.1"/>
    <property type="match status" value="1"/>
</dbReference>
<dbReference type="PANTHER" id="PTHR48099:SF5">
    <property type="entry name" value="C-1-TETRAHYDROFOLATE SYNTHASE, CYTOPLASMIC"/>
    <property type="match status" value="1"/>
</dbReference>
<dbReference type="PANTHER" id="PTHR48099">
    <property type="entry name" value="C-1-TETRAHYDROFOLATE SYNTHASE, CYTOPLASMIC-RELATED"/>
    <property type="match status" value="1"/>
</dbReference>
<dbReference type="Pfam" id="PF00763">
    <property type="entry name" value="THF_DHG_CYH"/>
    <property type="match status" value="1"/>
</dbReference>
<dbReference type="Pfam" id="PF02882">
    <property type="entry name" value="THF_DHG_CYH_C"/>
    <property type="match status" value="1"/>
</dbReference>
<dbReference type="PRINTS" id="PR00085">
    <property type="entry name" value="THFDHDRGNASE"/>
</dbReference>
<dbReference type="SUPFAM" id="SSF53223">
    <property type="entry name" value="Aminoacid dehydrogenase-like, N-terminal domain"/>
    <property type="match status" value="1"/>
</dbReference>
<dbReference type="SUPFAM" id="SSF51735">
    <property type="entry name" value="NAD(P)-binding Rossmann-fold domains"/>
    <property type="match status" value="1"/>
</dbReference>
<dbReference type="PROSITE" id="PS00766">
    <property type="entry name" value="THF_DHG_CYH_1"/>
    <property type="match status" value="1"/>
</dbReference>
<dbReference type="PROSITE" id="PS00767">
    <property type="entry name" value="THF_DHG_CYH_2"/>
    <property type="match status" value="1"/>
</dbReference>
<gene>
    <name evidence="1" type="primary">folD</name>
    <name type="ordered locus">HH_1366</name>
</gene>
<keyword id="KW-0028">Amino-acid biosynthesis</keyword>
<keyword id="KW-0368">Histidine biosynthesis</keyword>
<keyword id="KW-0378">Hydrolase</keyword>
<keyword id="KW-0486">Methionine biosynthesis</keyword>
<keyword id="KW-0511">Multifunctional enzyme</keyword>
<keyword id="KW-0521">NADP</keyword>
<keyword id="KW-0554">One-carbon metabolism</keyword>
<keyword id="KW-0560">Oxidoreductase</keyword>
<keyword id="KW-0658">Purine biosynthesis</keyword>
<keyword id="KW-1185">Reference proteome</keyword>
<protein>
    <recommendedName>
        <fullName evidence="1">Bifunctional protein FolD</fullName>
    </recommendedName>
    <domain>
        <recommendedName>
            <fullName evidence="1">Methylenetetrahydrofolate dehydrogenase</fullName>
            <ecNumber evidence="1">1.5.1.5</ecNumber>
        </recommendedName>
    </domain>
    <domain>
        <recommendedName>
            <fullName evidence="1">Methenyltetrahydrofolate cyclohydrolase</fullName>
            <ecNumber evidence="1">3.5.4.9</ecNumber>
        </recommendedName>
    </domain>
</protein>
<evidence type="ECO:0000255" key="1">
    <source>
        <dbReference type="HAMAP-Rule" id="MF_01576"/>
    </source>
</evidence>
<organism>
    <name type="scientific">Helicobacter hepaticus (strain ATCC 51449 / 3B1)</name>
    <dbReference type="NCBI Taxonomy" id="235279"/>
    <lineage>
        <taxon>Bacteria</taxon>
        <taxon>Pseudomonadati</taxon>
        <taxon>Campylobacterota</taxon>
        <taxon>Epsilonproteobacteria</taxon>
        <taxon>Campylobacterales</taxon>
        <taxon>Helicobacteraceae</taxon>
        <taxon>Helicobacter</taxon>
    </lineage>
</organism>
<feature type="chain" id="PRO_0000268368" description="Bifunctional protein FolD">
    <location>
        <begin position="1"/>
        <end position="286"/>
    </location>
</feature>
<feature type="binding site" evidence="1">
    <location>
        <begin position="163"/>
        <end position="165"/>
    </location>
    <ligand>
        <name>NADP(+)</name>
        <dbReference type="ChEBI" id="CHEBI:58349"/>
    </ligand>
</feature>
<feature type="binding site" evidence="1">
    <location>
        <position position="188"/>
    </location>
    <ligand>
        <name>NADP(+)</name>
        <dbReference type="ChEBI" id="CHEBI:58349"/>
    </ligand>
</feature>
<feature type="binding site" evidence="1">
    <location>
        <position position="229"/>
    </location>
    <ligand>
        <name>NADP(+)</name>
        <dbReference type="ChEBI" id="CHEBI:58349"/>
    </ligand>
</feature>
<sequence length="286" mass="30647">MTLLDGKSLSVTIERDLTEQIAALVSQGVTPGLAVILVGNNPASCAYVQMKAKACKRVGIYSVTHEMPSKITQDELLSVIEILNNDPNIDGILVQLPLPAHIQTSKVLEAINPKKDVDGFHPFNIGRLSVNVDTFVPATPLGVMKLLESYHIDVRGKDVVIIGMSNIVGKPLMSLMLNAGASVSCCHILTRDVKQYTKNADIVCVAVGKVGLLSADMIKEGAVVVDVGINRLESGTLVGDVDFENVAPKSSFITPVPGGVGPMTIVSLLQNTYKAAMYRLEQRMRV</sequence>
<accession>Q7VGF6</accession>
<name>FOLD_HELHP</name>
<proteinExistence type="inferred from homology"/>